<proteinExistence type="inferred from homology"/>
<protein>
    <recommendedName>
        <fullName evidence="1">Cytochrome c-type biogenesis protein CcmE</fullName>
    </recommendedName>
    <alternativeName>
        <fullName evidence="1">Cytochrome c maturation protein E</fullName>
    </alternativeName>
    <alternativeName>
        <fullName evidence="1">Heme chaperone CcmE</fullName>
    </alternativeName>
</protein>
<organism>
    <name type="scientific">Hyphomonas neptunium (strain ATCC 15444)</name>
    <dbReference type="NCBI Taxonomy" id="228405"/>
    <lineage>
        <taxon>Bacteria</taxon>
        <taxon>Pseudomonadati</taxon>
        <taxon>Pseudomonadota</taxon>
        <taxon>Alphaproteobacteria</taxon>
        <taxon>Hyphomonadales</taxon>
        <taxon>Hyphomonadaceae</taxon>
        <taxon>Hyphomonas</taxon>
    </lineage>
</organism>
<reference key="1">
    <citation type="journal article" date="2006" name="J. Bacteriol.">
        <title>Comparative genomic evidence for a close relationship between the dimorphic prosthecate bacteria Hyphomonas neptunium and Caulobacter crescentus.</title>
        <authorList>
            <person name="Badger J.H."/>
            <person name="Hoover T.R."/>
            <person name="Brun Y.V."/>
            <person name="Weiner R.M."/>
            <person name="Laub M.T."/>
            <person name="Alexandre G."/>
            <person name="Mrazek J."/>
            <person name="Ren Q."/>
            <person name="Paulsen I.T."/>
            <person name="Nelson K.E."/>
            <person name="Khouri H.M."/>
            <person name="Radune D."/>
            <person name="Sosa J."/>
            <person name="Dodson R.J."/>
            <person name="Sullivan S.A."/>
            <person name="Rosovitz M.J."/>
            <person name="Madupu R."/>
            <person name="Brinkac L.M."/>
            <person name="Durkin A.S."/>
            <person name="Daugherty S.C."/>
            <person name="Kothari S.P."/>
            <person name="Giglio M.G."/>
            <person name="Zhou L."/>
            <person name="Haft D.H."/>
            <person name="Selengut J.D."/>
            <person name="Davidsen T.M."/>
            <person name="Yang Q."/>
            <person name="Zafar N."/>
            <person name="Ward N.L."/>
        </authorList>
    </citation>
    <scope>NUCLEOTIDE SEQUENCE [LARGE SCALE GENOMIC DNA]</scope>
    <source>
        <strain>ATCC 15444</strain>
    </source>
</reference>
<dbReference type="EMBL" id="CP000158">
    <property type="protein sequence ID" value="ABI75366.1"/>
    <property type="molecule type" value="Genomic_DNA"/>
</dbReference>
<dbReference type="RefSeq" id="WP_011646327.1">
    <property type="nucleotide sequence ID" value="NC_008358.1"/>
</dbReference>
<dbReference type="SMR" id="Q0C2L6"/>
<dbReference type="STRING" id="228405.HNE_1309"/>
<dbReference type="KEGG" id="hne:HNE_1309"/>
<dbReference type="eggNOG" id="COG2332">
    <property type="taxonomic scope" value="Bacteria"/>
</dbReference>
<dbReference type="HOGENOM" id="CLU_079503_1_1_5"/>
<dbReference type="Proteomes" id="UP000001959">
    <property type="component" value="Chromosome"/>
</dbReference>
<dbReference type="GO" id="GO:0005886">
    <property type="term" value="C:plasma membrane"/>
    <property type="evidence" value="ECO:0007669"/>
    <property type="project" value="UniProtKB-SubCell"/>
</dbReference>
<dbReference type="GO" id="GO:0020037">
    <property type="term" value="F:heme binding"/>
    <property type="evidence" value="ECO:0007669"/>
    <property type="project" value="InterPro"/>
</dbReference>
<dbReference type="GO" id="GO:0046872">
    <property type="term" value="F:metal ion binding"/>
    <property type="evidence" value="ECO:0007669"/>
    <property type="project" value="UniProtKB-KW"/>
</dbReference>
<dbReference type="GO" id="GO:0017004">
    <property type="term" value="P:cytochrome complex assembly"/>
    <property type="evidence" value="ECO:0007669"/>
    <property type="project" value="UniProtKB-KW"/>
</dbReference>
<dbReference type="Gene3D" id="2.40.50.140">
    <property type="entry name" value="Nucleic acid-binding proteins"/>
    <property type="match status" value="1"/>
</dbReference>
<dbReference type="HAMAP" id="MF_01959">
    <property type="entry name" value="CcmE"/>
    <property type="match status" value="1"/>
</dbReference>
<dbReference type="InterPro" id="IPR004329">
    <property type="entry name" value="CcmE"/>
</dbReference>
<dbReference type="InterPro" id="IPR036127">
    <property type="entry name" value="CcmE-like_sf"/>
</dbReference>
<dbReference type="InterPro" id="IPR012340">
    <property type="entry name" value="NA-bd_OB-fold"/>
</dbReference>
<dbReference type="PANTHER" id="PTHR34128">
    <property type="entry name" value="CYTOCHROME C-TYPE BIOGENESIS PROTEIN CCME HOMOLOG, MITOCHONDRIAL"/>
    <property type="match status" value="1"/>
</dbReference>
<dbReference type="PANTHER" id="PTHR34128:SF2">
    <property type="entry name" value="CYTOCHROME C-TYPE BIOGENESIS PROTEIN CCME HOMOLOG, MITOCHONDRIAL"/>
    <property type="match status" value="1"/>
</dbReference>
<dbReference type="Pfam" id="PF03100">
    <property type="entry name" value="CcmE"/>
    <property type="match status" value="1"/>
</dbReference>
<dbReference type="SUPFAM" id="SSF82093">
    <property type="entry name" value="Heme chaperone CcmE"/>
    <property type="match status" value="1"/>
</dbReference>
<name>CCME_HYPNA</name>
<gene>
    <name evidence="1" type="primary">ccmE</name>
    <name evidence="1" type="synonym">cycJ</name>
    <name type="ordered locus">HNE_1309</name>
</gene>
<comment type="function">
    <text evidence="1">Heme chaperone required for the biogenesis of c-type cytochromes. Transiently binds heme delivered by CcmC and transfers the heme to apo-cytochromes in a process facilitated by CcmF and CcmH.</text>
</comment>
<comment type="subcellular location">
    <subcellularLocation>
        <location evidence="1">Cell inner membrane</location>
        <topology evidence="1">Single-pass type II membrane protein</topology>
        <orientation evidence="1">Periplasmic side</orientation>
    </subcellularLocation>
</comment>
<comment type="similarity">
    <text evidence="1">Belongs to the CcmE/CycJ family.</text>
</comment>
<evidence type="ECO:0000255" key="1">
    <source>
        <dbReference type="HAMAP-Rule" id="MF_01959"/>
    </source>
</evidence>
<accession>Q0C2L6</accession>
<feature type="chain" id="PRO_1000189027" description="Cytochrome c-type biogenesis protein CcmE">
    <location>
        <begin position="1"/>
        <end position="141"/>
    </location>
</feature>
<feature type="topological domain" description="Cytoplasmic" evidence="1">
    <location>
        <begin position="1"/>
        <end position="7"/>
    </location>
</feature>
<feature type="transmembrane region" description="Helical; Signal-anchor for type II membrane protein" evidence="1">
    <location>
        <begin position="8"/>
        <end position="28"/>
    </location>
</feature>
<feature type="topological domain" description="Periplasmic" evidence="1">
    <location>
        <begin position="29"/>
        <end position="141"/>
    </location>
</feature>
<feature type="binding site" description="covalent" evidence="1">
    <location>
        <position position="125"/>
    </location>
    <ligand>
        <name>heme</name>
        <dbReference type="ChEBI" id="CHEBI:30413"/>
    </ligand>
</feature>
<feature type="binding site" description="axial binding residue" evidence="1">
    <location>
        <position position="129"/>
    </location>
    <ligand>
        <name>heme</name>
        <dbReference type="ChEBI" id="CHEBI:30413"/>
    </ligand>
    <ligandPart>
        <name>Fe</name>
        <dbReference type="ChEBI" id="CHEBI:18248"/>
    </ligandPart>
</feature>
<keyword id="KW-0997">Cell inner membrane</keyword>
<keyword id="KW-1003">Cell membrane</keyword>
<keyword id="KW-0201">Cytochrome c-type biogenesis</keyword>
<keyword id="KW-0349">Heme</keyword>
<keyword id="KW-0408">Iron</keyword>
<keyword id="KW-0472">Membrane</keyword>
<keyword id="KW-0479">Metal-binding</keyword>
<keyword id="KW-1185">Reference proteome</keyword>
<keyword id="KW-0735">Signal-anchor</keyword>
<keyword id="KW-0812">Transmembrane</keyword>
<keyword id="KW-1133">Transmembrane helix</keyword>
<sequence>MRARTRRLYTFGIAAALIVAAAALAFFALRENANLFYTPEVLAEKGLPREGREVKVGGWVEPGSLTYADGGATMRFTVIDNSPSTITVSFNGVAPDLFREGQGVVATGTFTPEGEFTARQLLAKHDENYQPRELKPLEAGG</sequence>